<dbReference type="EMBL" id="X53699">
    <property type="protein sequence ID" value="CAA37737.1"/>
    <property type="molecule type" value="mRNA"/>
</dbReference>
<dbReference type="EMBL" id="X51700">
    <property type="protein sequence ID" value="CAA35997.1"/>
    <property type="molecule type" value="mRNA"/>
</dbReference>
<dbReference type="EMBL" id="EF673278">
    <property type="protein sequence ID" value="ABU88822.1"/>
    <property type="molecule type" value="Genomic_DNA"/>
</dbReference>
<dbReference type="PIR" id="S12653">
    <property type="entry name" value="GEBO"/>
</dbReference>
<dbReference type="RefSeq" id="NP_776674.1">
    <property type="nucleotide sequence ID" value="NM_174249.2"/>
</dbReference>
<dbReference type="PDB" id="1Q3M">
    <property type="method" value="NMR"/>
    <property type="chains" value="A=52-100"/>
</dbReference>
<dbReference type="PDB" id="4MZZ">
    <property type="method" value="X-ray"/>
    <property type="resolution" value="1.88 A"/>
    <property type="chains" value="A/B=68-100"/>
</dbReference>
<dbReference type="PDB" id="8I74">
    <property type="method" value="X-ray"/>
    <property type="resolution" value="1.36 A"/>
    <property type="chains" value="A/B=68-100"/>
</dbReference>
<dbReference type="PDB" id="8I75">
    <property type="method" value="X-ray"/>
    <property type="resolution" value="1.33 A"/>
    <property type="chains" value="A/B=68-100"/>
</dbReference>
<dbReference type="PDB" id="8I76">
    <property type="method" value="X-ray"/>
    <property type="resolution" value="1.38 A"/>
    <property type="chains" value="A/B=68-100"/>
</dbReference>
<dbReference type="PDBsum" id="1Q3M"/>
<dbReference type="PDBsum" id="4MZZ"/>
<dbReference type="PDBsum" id="8I74"/>
<dbReference type="PDBsum" id="8I75"/>
<dbReference type="PDBsum" id="8I76"/>
<dbReference type="SMR" id="P02820"/>
<dbReference type="FunCoup" id="P02820">
    <property type="interactions" value="144"/>
</dbReference>
<dbReference type="STRING" id="9913.ENSBTAP00000047703"/>
<dbReference type="PaxDb" id="9913-ENSBTAP00000047703"/>
<dbReference type="GeneID" id="281646"/>
<dbReference type="KEGG" id="bta:281646"/>
<dbReference type="CTD" id="632"/>
<dbReference type="eggNOG" id="ENOG502S85I">
    <property type="taxonomic scope" value="Eukaryota"/>
</dbReference>
<dbReference type="InParanoid" id="P02820"/>
<dbReference type="OrthoDB" id="9950568at2759"/>
<dbReference type="EvolutionaryTrace" id="P02820"/>
<dbReference type="Proteomes" id="UP000009136">
    <property type="component" value="Unplaced"/>
</dbReference>
<dbReference type="GO" id="GO:0005737">
    <property type="term" value="C:cytoplasm"/>
    <property type="evidence" value="ECO:0000250"/>
    <property type="project" value="UniProtKB"/>
</dbReference>
<dbReference type="GO" id="GO:0005576">
    <property type="term" value="C:extracellular region"/>
    <property type="evidence" value="ECO:0000318"/>
    <property type="project" value="GO_Central"/>
</dbReference>
<dbReference type="GO" id="GO:0005509">
    <property type="term" value="F:calcium ion binding"/>
    <property type="evidence" value="ECO:0007669"/>
    <property type="project" value="InterPro"/>
</dbReference>
<dbReference type="GO" id="GO:0005179">
    <property type="term" value="F:hormone activity"/>
    <property type="evidence" value="ECO:0000250"/>
    <property type="project" value="UniProtKB"/>
</dbReference>
<dbReference type="GO" id="GO:0046848">
    <property type="term" value="F:hydroxyapatite binding"/>
    <property type="evidence" value="ECO:0000318"/>
    <property type="project" value="GO_Central"/>
</dbReference>
<dbReference type="GO" id="GO:0008147">
    <property type="term" value="F:structural constituent of bone"/>
    <property type="evidence" value="ECO:0000250"/>
    <property type="project" value="UniProtKB"/>
</dbReference>
<dbReference type="GO" id="GO:0031214">
    <property type="term" value="P:biomineral tissue development"/>
    <property type="evidence" value="ECO:0007669"/>
    <property type="project" value="UniProtKB-KW"/>
</dbReference>
<dbReference type="GO" id="GO:0060348">
    <property type="term" value="P:bone development"/>
    <property type="evidence" value="ECO:0000318"/>
    <property type="project" value="GO_Central"/>
</dbReference>
<dbReference type="GO" id="GO:0007420">
    <property type="term" value="P:brain development"/>
    <property type="evidence" value="ECO:0000250"/>
    <property type="project" value="UniProtKB"/>
</dbReference>
<dbReference type="GO" id="GO:0032869">
    <property type="term" value="P:cellular response to insulin stimulus"/>
    <property type="evidence" value="ECO:0000250"/>
    <property type="project" value="UniProtKB"/>
</dbReference>
<dbReference type="GO" id="GO:0050890">
    <property type="term" value="P:cognition"/>
    <property type="evidence" value="ECO:0000250"/>
    <property type="project" value="UniProtKB"/>
</dbReference>
<dbReference type="GO" id="GO:0042593">
    <property type="term" value="P:glucose homeostasis"/>
    <property type="evidence" value="ECO:0000250"/>
    <property type="project" value="UniProtKB"/>
</dbReference>
<dbReference type="GO" id="GO:0007611">
    <property type="term" value="P:learning or memory"/>
    <property type="evidence" value="ECO:0000250"/>
    <property type="project" value="UniProtKB"/>
</dbReference>
<dbReference type="GO" id="GO:1903011">
    <property type="term" value="P:negative regulation of bone development"/>
    <property type="evidence" value="ECO:0000250"/>
    <property type="project" value="UniProtKB"/>
</dbReference>
<dbReference type="GO" id="GO:0001649">
    <property type="term" value="P:osteoblast differentiation"/>
    <property type="evidence" value="ECO:0000318"/>
    <property type="project" value="GO_Central"/>
</dbReference>
<dbReference type="GO" id="GO:0001956">
    <property type="term" value="P:positive regulation of neurotransmitter secretion"/>
    <property type="evidence" value="ECO:0000250"/>
    <property type="project" value="UniProtKB"/>
</dbReference>
<dbReference type="GO" id="GO:0030500">
    <property type="term" value="P:regulation of bone mineralization"/>
    <property type="evidence" value="ECO:0007669"/>
    <property type="project" value="InterPro"/>
</dbReference>
<dbReference type="GO" id="GO:1900076">
    <property type="term" value="P:regulation of cellular response to insulin stimulus"/>
    <property type="evidence" value="ECO:0007669"/>
    <property type="project" value="InterPro"/>
</dbReference>
<dbReference type="GO" id="GO:2000224">
    <property type="term" value="P:regulation of testosterone biosynthetic process"/>
    <property type="evidence" value="ECO:0000250"/>
    <property type="project" value="UniProtKB"/>
</dbReference>
<dbReference type="GO" id="GO:0032571">
    <property type="term" value="P:response to vitamin K"/>
    <property type="evidence" value="ECO:0007669"/>
    <property type="project" value="InterPro"/>
</dbReference>
<dbReference type="GO" id="GO:0044342">
    <property type="term" value="P:type B pancreatic cell proliferation"/>
    <property type="evidence" value="ECO:0000250"/>
    <property type="project" value="UniProtKB"/>
</dbReference>
<dbReference type="InterPro" id="IPR035972">
    <property type="entry name" value="GLA-like_dom_SF"/>
</dbReference>
<dbReference type="InterPro" id="IPR000294">
    <property type="entry name" value="GLA_domain"/>
</dbReference>
<dbReference type="InterPro" id="IPR039176">
    <property type="entry name" value="Osteocalcin"/>
</dbReference>
<dbReference type="InterPro" id="IPR002384">
    <property type="entry name" value="Osteocalcin/MGP"/>
</dbReference>
<dbReference type="PANTHER" id="PTHR14235">
    <property type="entry name" value="OSTEOCALCIN"/>
    <property type="match status" value="1"/>
</dbReference>
<dbReference type="PANTHER" id="PTHR14235:SF0">
    <property type="entry name" value="OSTEOCALCIN"/>
    <property type="match status" value="1"/>
</dbReference>
<dbReference type="PRINTS" id="PR00002">
    <property type="entry name" value="GLABONE"/>
</dbReference>
<dbReference type="SMART" id="SM00069">
    <property type="entry name" value="GLA"/>
    <property type="match status" value="1"/>
</dbReference>
<dbReference type="SUPFAM" id="SSF57630">
    <property type="entry name" value="GLA-domain"/>
    <property type="match status" value="1"/>
</dbReference>
<dbReference type="PROSITE" id="PS00011">
    <property type="entry name" value="GLA_1"/>
    <property type="match status" value="1"/>
</dbReference>
<dbReference type="PROSITE" id="PS50998">
    <property type="entry name" value="GLA_2"/>
    <property type="match status" value="1"/>
</dbReference>
<sequence length="100" mass="11042">MRTPMLLALLALATLCLAGRADAKPGDAESGKGAAFVSKQEGSEVVKRLRRYLDHWLGAPAPYPDPLEPKREVCELNPDCDELADHIGFQEAYRRFYGPV</sequence>
<name>OSTCN_BOVIN</name>
<accession>P02820</accession>
<accession>A7YEW1</accession>
<keyword id="KW-0002">3D-structure</keyword>
<keyword id="KW-0091">Biomineralization</keyword>
<keyword id="KW-0106">Calcium</keyword>
<keyword id="KW-0165">Cleavage on pair of basic residues</keyword>
<keyword id="KW-0903">Direct protein sequencing</keyword>
<keyword id="KW-1015">Disulfide bond</keyword>
<keyword id="KW-0301">Gamma-carboxyglutamic acid</keyword>
<keyword id="KW-0372">Hormone</keyword>
<keyword id="KW-0379">Hydroxylation</keyword>
<keyword id="KW-0479">Metal-binding</keyword>
<keyword id="KW-1185">Reference proteome</keyword>
<keyword id="KW-0964">Secreted</keyword>
<keyword id="KW-0732">Signal</keyword>
<proteinExistence type="evidence at protein level"/>
<evidence type="ECO:0000250" key="1">
    <source>
        <dbReference type="UniProtKB" id="P86546"/>
    </source>
</evidence>
<evidence type="ECO:0000255" key="2">
    <source>
        <dbReference type="PROSITE-ProRule" id="PRU00463"/>
    </source>
</evidence>
<evidence type="ECO:0000269" key="3">
    <source>
    </source>
</evidence>
<evidence type="ECO:0000269" key="4">
    <source>
    </source>
</evidence>
<evidence type="ECO:0000305" key="5"/>
<evidence type="ECO:0000305" key="6">
    <source>
    </source>
</evidence>
<evidence type="ECO:0007829" key="7">
    <source>
        <dbReference type="PDB" id="8I75"/>
    </source>
</evidence>
<gene>
    <name type="primary">BGLAP</name>
</gene>
<reference key="1">
    <citation type="journal article" date="1990" name="Nucleic Acids Res.">
        <title>The cDNA and derived amino acid sequences of human and bovine bone Gla protein.</title>
        <authorList>
            <person name="Kiefer M.C."/>
            <person name="Saphire A.C.S."/>
            <person name="Bauer D.M."/>
            <person name="Barr P.J."/>
        </authorList>
    </citation>
    <scope>NUCLEOTIDE SEQUENCE [MRNA]</scope>
</reference>
<reference key="2">
    <citation type="submission" date="2007-06" db="EMBL/GenBank/DDBJ databases">
        <authorList>
            <person name="Paolella M.J."/>
            <person name="Baumgaertner S."/>
            <person name="Brenzel S."/>
            <person name="Havill H."/>
            <person name="Kozlowski A."/>
            <person name="Michael F."/>
            <person name="Mitchell K."/>
            <person name="Perrelli N."/>
        </authorList>
    </citation>
    <scope>NUCLEOTIDE SEQUENCE [GENOMIC DNA]</scope>
</reference>
<reference key="3">
    <citation type="journal article" date="1976" name="Proc. Natl. Acad. Sci. U.S.A.">
        <title>Primary structure of the gamma-carboxyglutamic acid-containing protein from bovine bone.</title>
        <authorList>
            <person name="Price P.A."/>
            <person name="Poser J.W."/>
            <person name="Raman N."/>
        </authorList>
    </citation>
    <scope>PROTEIN SEQUENCE OF 52-100</scope>
    <scope>FUNCTION</scope>
    <scope>HYDROXYLATION AT PRO-60</scope>
    <scope>GAMMA-CARBOXYGLUTAMATION AT GLU-68; GLU-72 AND GLU-75</scope>
</reference>
<reference key="4">
    <citation type="journal article" date="2003" name="Biochemistry">
        <title>The three-dimensional structure of bovine calcium ion-bound osteocalcin using 1H NMR spectroscopy.</title>
        <authorList>
            <person name="Dowd T.L."/>
            <person name="Rosen J.F."/>
            <person name="Li L."/>
            <person name="Gundberg C.M."/>
        </authorList>
    </citation>
    <scope>STRUCTURE BY NMR OF 52-100</scope>
    <scope>GAMMA-CARBOXYGLUTAMATION AT GLU-68; GLU-72 AND GLU-75</scope>
    <scope>CALCIUM-BINDING SITES</scope>
    <scope>DISULFIDE BOND</scope>
</reference>
<feature type="signal peptide">
    <location>
        <begin position="1"/>
        <end position="23"/>
    </location>
</feature>
<feature type="propeptide" id="PRO_0000011084" evidence="6">
    <location>
        <begin position="24"/>
        <end position="51"/>
    </location>
</feature>
<feature type="chain" id="PRO_0000011085" description="Osteocalcin" evidence="3">
    <location>
        <begin position="52"/>
        <end position="100"/>
    </location>
</feature>
<feature type="domain" description="Gla" evidence="2">
    <location>
        <begin position="52"/>
        <end position="98"/>
    </location>
</feature>
<feature type="binding site" evidence="4">
    <location>
        <position position="68"/>
    </location>
    <ligand>
        <name>Ca(2+)</name>
        <dbReference type="ChEBI" id="CHEBI:29108"/>
        <label>1</label>
    </ligand>
</feature>
<feature type="binding site" evidence="4">
    <location>
        <position position="72"/>
    </location>
    <ligand>
        <name>Ca(2+)</name>
        <dbReference type="ChEBI" id="CHEBI:29108"/>
        <label>2</label>
    </ligand>
</feature>
<feature type="binding site" evidence="4">
    <location>
        <position position="75"/>
    </location>
    <ligand>
        <name>Ca(2+)</name>
        <dbReference type="ChEBI" id="CHEBI:29108"/>
        <label>2</label>
    </ligand>
</feature>
<feature type="binding site" evidence="4">
    <location>
        <position position="75"/>
    </location>
    <ligand>
        <name>Ca(2+)</name>
        <dbReference type="ChEBI" id="CHEBI:29108"/>
        <label>3</label>
    </ligand>
</feature>
<feature type="binding site" evidence="4">
    <location>
        <position position="81"/>
    </location>
    <ligand>
        <name>Ca(2+)</name>
        <dbReference type="ChEBI" id="CHEBI:29108"/>
        <label>3</label>
    </ligand>
</feature>
<feature type="modified residue" description="4-hydroxyproline" evidence="3">
    <location>
        <position position="60"/>
    </location>
</feature>
<feature type="modified residue" description="4-carboxyglutamate" evidence="2 3 4">
    <location>
        <position position="68"/>
    </location>
</feature>
<feature type="modified residue" description="4-carboxyglutamate" evidence="2 3 4">
    <location>
        <position position="72"/>
    </location>
</feature>
<feature type="modified residue" description="4-carboxyglutamate" evidence="2 3 4">
    <location>
        <position position="75"/>
    </location>
</feature>
<feature type="disulfide bond" evidence="2 4">
    <location>
        <begin position="74"/>
        <end position="80"/>
    </location>
</feature>
<feature type="helix" evidence="7">
    <location>
        <begin position="69"/>
        <end position="75"/>
    </location>
</feature>
<feature type="helix" evidence="7">
    <location>
        <begin position="78"/>
        <end position="87"/>
    </location>
</feature>
<feature type="helix" evidence="7">
    <location>
        <begin position="89"/>
        <end position="97"/>
    </location>
</feature>
<organism>
    <name type="scientific">Bos taurus</name>
    <name type="common">Bovine</name>
    <dbReference type="NCBI Taxonomy" id="9913"/>
    <lineage>
        <taxon>Eukaryota</taxon>
        <taxon>Metazoa</taxon>
        <taxon>Chordata</taxon>
        <taxon>Craniata</taxon>
        <taxon>Vertebrata</taxon>
        <taxon>Euteleostomi</taxon>
        <taxon>Mammalia</taxon>
        <taxon>Eutheria</taxon>
        <taxon>Laurasiatheria</taxon>
        <taxon>Artiodactyla</taxon>
        <taxon>Ruminantia</taxon>
        <taxon>Pecora</taxon>
        <taxon>Bovidae</taxon>
        <taxon>Bovinae</taxon>
        <taxon>Bos</taxon>
    </lineage>
</organism>
<protein>
    <recommendedName>
        <fullName>Osteocalcin</fullName>
    </recommendedName>
    <alternativeName>
        <fullName>Bone Gla protein</fullName>
        <shortName>BGP</shortName>
    </alternativeName>
    <alternativeName>
        <fullName>Gamma-carboxyglutamic acid-containing protein</fullName>
    </alternativeName>
</protein>
<comment type="function">
    <text evidence="1 3">The carboxylated form is one of the main organic components of the bone matrix, which constitutes 1-2% of the total bone protein (PubMed:1068450). It acts as a negative regulator of bone formation and is required to limit bone formation without impairing bone resorption or mineralization. The carboxylated form binds strongly to apatite and calcium (By similarity).</text>
</comment>
<comment type="function">
    <text evidence="1">The uncarboxylated form acts as a hormone secreted by osteoblasts, which regulates different cellular processes, such as energy metabolism, male fertility and brain development. Regulates of energy metabolism by acting as a hormone favoring pancreatic beta-cell proliferation, insulin secretion and sensitivity and energy expenditure. Uncarboxylated osteocalcin hormone also promotes testosterone production in the testes: acts as a ligand for G protein-coupled receptor GPRC6A at the surface of Leydig cells, initiating a signaling response that promotes the expression of enzymes required for testosterone synthesis in a CREB-dependent manner. Also acts as a regulator of brain development: osteocalcin hormone crosses the blood-brain barrier and acts as a ligand for GPR158 on neurons, initiating a signaling response that prevents neuronal apoptosis in the hippocampus, favors the synthesis of all monoamine neurotransmitters and inhibits that of gamma-aminobutyric acid (GABA). Osteocalcin also crosses the placenta during pregnancy and maternal osteocalcin is required for fetal brain development.</text>
</comment>
<comment type="subcellular location">
    <subcellularLocation>
        <location evidence="3">Secreted</location>
    </subcellularLocation>
</comment>
<comment type="PTM">
    <text evidence="1 2 3 4">Gamma-carboxyglutamate residues are formed by vitamin K dependent carboxylation by GGCX. These residues are essential for the binding of calcium (By similarity) (PubMed:1068450, PubMed:12820886). Decarboxylation promotes the hormone activity (By similarity).</text>
</comment>
<comment type="similarity">
    <text evidence="5">Belongs to the osteocalcin/matrix Gla protein family.</text>
</comment>